<feature type="chain" id="PRO_0000071428" description="Serine/threonine-protein phosphatase 2A 55 kDa regulatory subunit B gamma isoform">
    <location>
        <begin position="1"/>
        <end position="447"/>
    </location>
</feature>
<feature type="repeat" description="WD 1">
    <location>
        <begin position="22"/>
        <end position="61"/>
    </location>
</feature>
<feature type="repeat" description="WD 2">
    <location>
        <begin position="87"/>
        <end position="128"/>
    </location>
</feature>
<feature type="repeat" description="WD 3">
    <location>
        <begin position="171"/>
        <end position="209"/>
    </location>
</feature>
<feature type="repeat" description="WD 4">
    <location>
        <begin position="220"/>
        <end position="260"/>
    </location>
</feature>
<feature type="repeat" description="WD 5">
    <location>
        <begin position="279"/>
        <end position="317"/>
    </location>
</feature>
<feature type="repeat" description="WD 6">
    <location>
        <begin position="334"/>
        <end position="375"/>
    </location>
</feature>
<feature type="repeat" description="WD 7">
    <location>
        <begin position="410"/>
        <end position="446"/>
    </location>
</feature>
<feature type="splice variant" id="VSP_036457" description="In isoform 2." evidence="3">
    <original>MGEDTDTRKINHSFLRDHSYVTE</original>
    <variation>MGLSFFSKHLPIQEGQPWALKTP</variation>
    <location>
        <begin position="1"/>
        <end position="23"/>
    </location>
</feature>
<feature type="splice variant" id="VSP_036458" description="In isoform 3." evidence="4">
    <original>MGEDTDTRKINHSFLRDHSYVTE</original>
    <variation>MGKRDT</variation>
    <location>
        <begin position="1"/>
        <end position="23"/>
    </location>
</feature>
<feature type="splice variant" id="VSP_043380" description="In isoform 4." evidence="3">
    <original>MGEDTDTRKINHSFLRDHSYVTE</original>
    <variation>MREADTLRPPQLMEVS</variation>
    <location>
        <begin position="1"/>
        <end position="23"/>
    </location>
</feature>
<feature type="sequence conflict" description="In Ref. 2; AAG39636." evidence="5" ref="2">
    <original>E</original>
    <variation>D</variation>
    <location>
        <position position="66"/>
    </location>
</feature>
<feature type="sequence conflict" description="In Ref. 2; AAG39636." evidence="5" ref="2">
    <original>R</original>
    <variation>P</variation>
    <location>
        <position position="253"/>
    </location>
</feature>
<feature type="sequence conflict" description="In Ref. 2; AAG39636 and 3; AAP97279." evidence="5" ref="2 3">
    <original>G</original>
    <variation>D</variation>
    <location>
        <position position="293"/>
    </location>
</feature>
<reference key="1">
    <citation type="journal article" date="1999" name="DNA Res.">
        <title>Genomic structure and localization of the human phosphatase 2A BR gamma regulatory subunit.</title>
        <authorList>
            <person name="Torres R."/>
            <person name="Ide S.E."/>
            <person name="Dehejia A."/>
            <person name="Baras A."/>
            <person name="Polymeropoulos M.H."/>
        </authorList>
    </citation>
    <scope>NUCLEOTIDE SEQUENCE [GENOMIC DNA]</scope>
</reference>
<reference key="2">
    <citation type="journal article" date="2000" name="Genomics">
        <title>Molecular cloning and mapping of the brain-abundant B1gamma subunit of protein phosphatase 2A, PPP2R2C, to human chromosome 4p16.</title>
        <authorList>
            <person name="Hu P."/>
            <person name="Yu L."/>
            <person name="Zhang M."/>
            <person name="Zheng L."/>
            <person name="Zhao Y."/>
            <person name="Fu Q."/>
            <person name="Zhao S."/>
        </authorList>
    </citation>
    <scope>NUCLEOTIDE SEQUENCE [MRNA] (ISOFORM 1)</scope>
</reference>
<reference key="3">
    <citation type="submission" date="1999-04" db="EMBL/GenBank/DDBJ databases">
        <title>Cloning of a new human cDNA homologous to Oryctolagus cuniculus protein phosphatase 2A1 B gamma subunit.</title>
        <authorList>
            <person name="Yu L."/>
            <person name="Zhao S.Y."/>
        </authorList>
    </citation>
    <scope>NUCLEOTIDE SEQUENCE [MRNA] (ISOFORM 1)</scope>
</reference>
<reference key="4">
    <citation type="journal article" date="2004" name="Nat. Genet.">
        <title>Complete sequencing and characterization of 21,243 full-length human cDNAs.</title>
        <authorList>
            <person name="Ota T."/>
            <person name="Suzuki Y."/>
            <person name="Nishikawa T."/>
            <person name="Otsuki T."/>
            <person name="Sugiyama T."/>
            <person name="Irie R."/>
            <person name="Wakamatsu A."/>
            <person name="Hayashi K."/>
            <person name="Sato H."/>
            <person name="Nagai K."/>
            <person name="Kimura K."/>
            <person name="Makita H."/>
            <person name="Sekine M."/>
            <person name="Obayashi M."/>
            <person name="Nishi T."/>
            <person name="Shibahara T."/>
            <person name="Tanaka T."/>
            <person name="Ishii S."/>
            <person name="Yamamoto J."/>
            <person name="Saito K."/>
            <person name="Kawai Y."/>
            <person name="Isono Y."/>
            <person name="Nakamura Y."/>
            <person name="Nagahari K."/>
            <person name="Murakami K."/>
            <person name="Yasuda T."/>
            <person name="Iwayanagi T."/>
            <person name="Wagatsuma M."/>
            <person name="Shiratori A."/>
            <person name="Sudo H."/>
            <person name="Hosoiri T."/>
            <person name="Kaku Y."/>
            <person name="Kodaira H."/>
            <person name="Kondo H."/>
            <person name="Sugawara M."/>
            <person name="Takahashi M."/>
            <person name="Kanda K."/>
            <person name="Yokoi T."/>
            <person name="Furuya T."/>
            <person name="Kikkawa E."/>
            <person name="Omura Y."/>
            <person name="Abe K."/>
            <person name="Kamihara K."/>
            <person name="Katsuta N."/>
            <person name="Sato K."/>
            <person name="Tanikawa M."/>
            <person name="Yamazaki M."/>
            <person name="Ninomiya K."/>
            <person name="Ishibashi T."/>
            <person name="Yamashita H."/>
            <person name="Murakawa K."/>
            <person name="Fujimori K."/>
            <person name="Tanai H."/>
            <person name="Kimata M."/>
            <person name="Watanabe M."/>
            <person name="Hiraoka S."/>
            <person name="Chiba Y."/>
            <person name="Ishida S."/>
            <person name="Ono Y."/>
            <person name="Takiguchi S."/>
            <person name="Watanabe S."/>
            <person name="Yosida M."/>
            <person name="Hotuta T."/>
            <person name="Kusano J."/>
            <person name="Kanehori K."/>
            <person name="Takahashi-Fujii A."/>
            <person name="Hara H."/>
            <person name="Tanase T.-O."/>
            <person name="Nomura Y."/>
            <person name="Togiya S."/>
            <person name="Komai F."/>
            <person name="Hara R."/>
            <person name="Takeuchi K."/>
            <person name="Arita M."/>
            <person name="Imose N."/>
            <person name="Musashino K."/>
            <person name="Yuuki H."/>
            <person name="Oshima A."/>
            <person name="Sasaki N."/>
            <person name="Aotsuka S."/>
            <person name="Yoshikawa Y."/>
            <person name="Matsunawa H."/>
            <person name="Ichihara T."/>
            <person name="Shiohata N."/>
            <person name="Sano S."/>
            <person name="Moriya S."/>
            <person name="Momiyama H."/>
            <person name="Satoh N."/>
            <person name="Takami S."/>
            <person name="Terashima Y."/>
            <person name="Suzuki O."/>
            <person name="Nakagawa S."/>
            <person name="Senoh A."/>
            <person name="Mizoguchi H."/>
            <person name="Goto Y."/>
            <person name="Shimizu F."/>
            <person name="Wakebe H."/>
            <person name="Hishigaki H."/>
            <person name="Watanabe T."/>
            <person name="Sugiyama A."/>
            <person name="Takemoto M."/>
            <person name="Kawakami B."/>
            <person name="Yamazaki M."/>
            <person name="Watanabe K."/>
            <person name="Kumagai A."/>
            <person name="Itakura S."/>
            <person name="Fukuzumi Y."/>
            <person name="Fujimori Y."/>
            <person name="Komiyama M."/>
            <person name="Tashiro H."/>
            <person name="Tanigami A."/>
            <person name="Fujiwara T."/>
            <person name="Ono T."/>
            <person name="Yamada K."/>
            <person name="Fujii Y."/>
            <person name="Ozaki K."/>
            <person name="Hirao M."/>
            <person name="Ohmori Y."/>
            <person name="Kawabata A."/>
            <person name="Hikiji T."/>
            <person name="Kobatake N."/>
            <person name="Inagaki H."/>
            <person name="Ikema Y."/>
            <person name="Okamoto S."/>
            <person name="Okitani R."/>
            <person name="Kawakami T."/>
            <person name="Noguchi S."/>
            <person name="Itoh T."/>
            <person name="Shigeta K."/>
            <person name="Senba T."/>
            <person name="Matsumura K."/>
            <person name="Nakajima Y."/>
            <person name="Mizuno T."/>
            <person name="Morinaga M."/>
            <person name="Sasaki M."/>
            <person name="Togashi T."/>
            <person name="Oyama M."/>
            <person name="Hata H."/>
            <person name="Watanabe M."/>
            <person name="Komatsu T."/>
            <person name="Mizushima-Sugano J."/>
            <person name="Satoh T."/>
            <person name="Shirai Y."/>
            <person name="Takahashi Y."/>
            <person name="Nakagawa K."/>
            <person name="Okumura K."/>
            <person name="Nagase T."/>
            <person name="Nomura N."/>
            <person name="Kikuchi H."/>
            <person name="Masuho Y."/>
            <person name="Yamashita R."/>
            <person name="Nakai K."/>
            <person name="Yada T."/>
            <person name="Nakamura Y."/>
            <person name="Ohara O."/>
            <person name="Isogai T."/>
            <person name="Sugano S."/>
        </authorList>
    </citation>
    <scope>NUCLEOTIDE SEQUENCE [LARGE SCALE MRNA] (ISOFORMS 2 AND 4)</scope>
    <source>
        <tissue>Brain</tissue>
        <tissue>Testis</tissue>
        <tissue>Thalamus</tissue>
    </source>
</reference>
<reference key="5">
    <citation type="journal article" date="2005" name="Nature">
        <title>Generation and annotation of the DNA sequences of human chromosomes 2 and 4.</title>
        <authorList>
            <person name="Hillier L.W."/>
            <person name="Graves T.A."/>
            <person name="Fulton R.S."/>
            <person name="Fulton L.A."/>
            <person name="Pepin K.H."/>
            <person name="Minx P."/>
            <person name="Wagner-McPherson C."/>
            <person name="Layman D."/>
            <person name="Wylie K."/>
            <person name="Sekhon M."/>
            <person name="Becker M.C."/>
            <person name="Fewell G.A."/>
            <person name="Delehaunty K.D."/>
            <person name="Miner T.L."/>
            <person name="Nash W.E."/>
            <person name="Kremitzki C."/>
            <person name="Oddy L."/>
            <person name="Du H."/>
            <person name="Sun H."/>
            <person name="Bradshaw-Cordum H."/>
            <person name="Ali J."/>
            <person name="Carter J."/>
            <person name="Cordes M."/>
            <person name="Harris A."/>
            <person name="Isak A."/>
            <person name="van Brunt A."/>
            <person name="Nguyen C."/>
            <person name="Du F."/>
            <person name="Courtney L."/>
            <person name="Kalicki J."/>
            <person name="Ozersky P."/>
            <person name="Abbott S."/>
            <person name="Armstrong J."/>
            <person name="Belter E.A."/>
            <person name="Caruso L."/>
            <person name="Cedroni M."/>
            <person name="Cotton M."/>
            <person name="Davidson T."/>
            <person name="Desai A."/>
            <person name="Elliott G."/>
            <person name="Erb T."/>
            <person name="Fronick C."/>
            <person name="Gaige T."/>
            <person name="Haakenson W."/>
            <person name="Haglund K."/>
            <person name="Holmes A."/>
            <person name="Harkins R."/>
            <person name="Kim K."/>
            <person name="Kruchowski S.S."/>
            <person name="Strong C.M."/>
            <person name="Grewal N."/>
            <person name="Goyea E."/>
            <person name="Hou S."/>
            <person name="Levy A."/>
            <person name="Martinka S."/>
            <person name="Mead K."/>
            <person name="McLellan M.D."/>
            <person name="Meyer R."/>
            <person name="Randall-Maher J."/>
            <person name="Tomlinson C."/>
            <person name="Dauphin-Kohlberg S."/>
            <person name="Kozlowicz-Reilly A."/>
            <person name="Shah N."/>
            <person name="Swearengen-Shahid S."/>
            <person name="Snider J."/>
            <person name="Strong J.T."/>
            <person name="Thompson J."/>
            <person name="Yoakum M."/>
            <person name="Leonard S."/>
            <person name="Pearman C."/>
            <person name="Trani L."/>
            <person name="Radionenko M."/>
            <person name="Waligorski J.E."/>
            <person name="Wang C."/>
            <person name="Rock S.M."/>
            <person name="Tin-Wollam A.-M."/>
            <person name="Maupin R."/>
            <person name="Latreille P."/>
            <person name="Wendl M.C."/>
            <person name="Yang S.-P."/>
            <person name="Pohl C."/>
            <person name="Wallis J.W."/>
            <person name="Spieth J."/>
            <person name="Bieri T.A."/>
            <person name="Berkowicz N."/>
            <person name="Nelson J.O."/>
            <person name="Osborne J."/>
            <person name="Ding L."/>
            <person name="Meyer R."/>
            <person name="Sabo A."/>
            <person name="Shotland Y."/>
            <person name="Sinha P."/>
            <person name="Wohldmann P.E."/>
            <person name="Cook L.L."/>
            <person name="Hickenbotham M.T."/>
            <person name="Eldred J."/>
            <person name="Williams D."/>
            <person name="Jones T.A."/>
            <person name="She X."/>
            <person name="Ciccarelli F.D."/>
            <person name="Izaurralde E."/>
            <person name="Taylor J."/>
            <person name="Schmutz J."/>
            <person name="Myers R.M."/>
            <person name="Cox D.R."/>
            <person name="Huang X."/>
            <person name="McPherson J.D."/>
            <person name="Mardis E.R."/>
            <person name="Clifton S.W."/>
            <person name="Warren W.C."/>
            <person name="Chinwalla A.T."/>
            <person name="Eddy S.R."/>
            <person name="Marra M.A."/>
            <person name="Ovcharenko I."/>
            <person name="Furey T.S."/>
            <person name="Miller W."/>
            <person name="Eichler E.E."/>
            <person name="Bork P."/>
            <person name="Suyama M."/>
            <person name="Torrents D."/>
            <person name="Waterston R.H."/>
            <person name="Wilson R.K."/>
        </authorList>
    </citation>
    <scope>NUCLEOTIDE SEQUENCE [LARGE SCALE GENOMIC DNA]</scope>
</reference>
<reference key="6">
    <citation type="submission" date="2005-09" db="EMBL/GenBank/DDBJ databases">
        <authorList>
            <person name="Mural R.J."/>
            <person name="Istrail S."/>
            <person name="Sutton G.G."/>
            <person name="Florea L."/>
            <person name="Halpern A.L."/>
            <person name="Mobarry C.M."/>
            <person name="Lippert R."/>
            <person name="Walenz B."/>
            <person name="Shatkay H."/>
            <person name="Dew I."/>
            <person name="Miller J.R."/>
            <person name="Flanigan M.J."/>
            <person name="Edwards N.J."/>
            <person name="Bolanos R."/>
            <person name="Fasulo D."/>
            <person name="Halldorsson B.V."/>
            <person name="Hannenhalli S."/>
            <person name="Turner R."/>
            <person name="Yooseph S."/>
            <person name="Lu F."/>
            <person name="Nusskern D.R."/>
            <person name="Shue B.C."/>
            <person name="Zheng X.H."/>
            <person name="Zhong F."/>
            <person name="Delcher A.L."/>
            <person name="Huson D.H."/>
            <person name="Kravitz S.A."/>
            <person name="Mouchard L."/>
            <person name="Reinert K."/>
            <person name="Remington K.A."/>
            <person name="Clark A.G."/>
            <person name="Waterman M.S."/>
            <person name="Eichler E.E."/>
            <person name="Adams M.D."/>
            <person name="Hunkapiller M.W."/>
            <person name="Myers E.W."/>
            <person name="Venter J.C."/>
        </authorList>
    </citation>
    <scope>NUCLEOTIDE SEQUENCE [LARGE SCALE GENOMIC DNA]</scope>
</reference>
<reference key="7">
    <citation type="journal article" date="2004" name="Genome Res.">
        <title>The status, quality, and expansion of the NIH full-length cDNA project: the Mammalian Gene Collection (MGC).</title>
        <authorList>
            <consortium name="The MGC Project Team"/>
        </authorList>
    </citation>
    <scope>NUCLEOTIDE SEQUENCE [LARGE SCALE MRNA] (ISOFORM 3)</scope>
    <source>
        <tissue>Testis</tissue>
    </source>
</reference>
<reference key="8">
    <citation type="journal article" date="2015" name="FEBS Lett.">
        <title>HSF1 transcriptional activity is modulated by IER5 and PP2A/B55.</title>
        <authorList>
            <person name="Ishikawa Y."/>
            <person name="Kawabata S."/>
            <person name="Sakurai H."/>
        </authorList>
    </citation>
    <scope>INTERACTION WITH IER5</scope>
</reference>
<accession>Q9Y2T4</accession>
<accession>A8MSY7</accession>
<accession>B7Z3Y1</accession>
<accession>Q7Z4V7</accession>
<accession>Q8NEC4</accession>
<accession>Q9H3G7</accession>
<gene>
    <name type="primary">PPP2R2C</name>
</gene>
<protein>
    <recommendedName>
        <fullName>Serine/threonine-protein phosphatase 2A 55 kDa regulatory subunit B gamma isoform</fullName>
    </recommendedName>
    <alternativeName>
        <fullName>IMYPNO1</fullName>
    </alternativeName>
    <alternativeName>
        <fullName>PP2A subunit B isoform B55-gamma</fullName>
    </alternativeName>
    <alternativeName>
        <fullName>PP2A subunit B isoform PR55-gamma</fullName>
    </alternativeName>
    <alternativeName>
        <fullName>PP2A subunit B isoform R2-gamma</fullName>
    </alternativeName>
    <alternativeName>
        <fullName>PP2A subunit B isoform gamma</fullName>
    </alternativeName>
</protein>
<name>2ABG_HUMAN</name>
<proteinExistence type="evidence at protein level"/>
<organism>
    <name type="scientific">Homo sapiens</name>
    <name type="common">Human</name>
    <dbReference type="NCBI Taxonomy" id="9606"/>
    <lineage>
        <taxon>Eukaryota</taxon>
        <taxon>Metazoa</taxon>
        <taxon>Chordata</taxon>
        <taxon>Craniata</taxon>
        <taxon>Vertebrata</taxon>
        <taxon>Euteleostomi</taxon>
        <taxon>Mammalia</taxon>
        <taxon>Eutheria</taxon>
        <taxon>Euarchontoglires</taxon>
        <taxon>Primates</taxon>
        <taxon>Haplorrhini</taxon>
        <taxon>Catarrhini</taxon>
        <taxon>Hominidae</taxon>
        <taxon>Homo</taxon>
    </lineage>
</organism>
<keyword id="KW-0025">Alternative splicing</keyword>
<keyword id="KW-1267">Proteomics identification</keyword>
<keyword id="KW-1185">Reference proteome</keyword>
<keyword id="KW-0677">Repeat</keyword>
<keyword id="KW-0853">WD repeat</keyword>
<comment type="function">
    <text>The B regulatory subunit might modulate substrate selectivity and catalytic activity, and might also direct the localization of the catalytic enzyme to a particular subcellular compartment.</text>
</comment>
<comment type="subunit">
    <text evidence="1 2">PP2A consists of a common heterodimeric core enzyme, composed of a 36 kDa catalytic subunit (subunit C) and a 65 kDa constant regulatory subunit (PR65 or subunit A), that associates with a variety of regulatory subunits. Proteins that associate with the core dimer include three families of regulatory subunits B (the R2/B/PR55/B55, R3/B''/PR72/PR130/PR59 and R5/B'/B56 families), the 48 kDa variable regulatory subunit, viral proteins, and cell signaling molecules (By similarity). Interacts with IER5 (PubMed:25816751).</text>
</comment>
<comment type="interaction">
    <interactant intactId="EBI-1774058">
        <id>Q9Y2T4</id>
    </interactant>
    <interactant intactId="EBI-712311">
        <id>P67775</id>
        <label>PPP2CA</label>
    </interactant>
    <organismsDiffer>false</organismsDiffer>
    <experiments>6</experiments>
</comment>
<comment type="alternative products">
    <event type="alternative splicing"/>
    <isoform>
        <id>Q9Y2T4-1</id>
        <name>1</name>
        <sequence type="displayed"/>
    </isoform>
    <isoform>
        <id>Q9Y2T4-2</id>
        <name>2</name>
        <sequence type="described" ref="VSP_036457"/>
    </isoform>
    <isoform>
        <id>Q9Y2T4-3</id>
        <name>3</name>
        <sequence type="described" ref="VSP_036458"/>
    </isoform>
    <isoform>
        <id>Q9Y2T4-4</id>
        <name>4</name>
        <sequence type="described" ref="VSP_043380"/>
    </isoform>
</comment>
<comment type="similarity">
    <text evidence="5">Belongs to the phosphatase 2A regulatory subunit B family.</text>
</comment>
<comment type="caution">
    <text evidence="5">The EMBL entry for PubMed:10574460 is not complete, the paper shows the rest of the sequence (residues 1 to 23).</text>
</comment>
<dbReference type="EMBL" id="AH007514">
    <property type="protein sequence ID" value="AAD20987.1"/>
    <property type="molecule type" value="Genomic_DNA"/>
</dbReference>
<dbReference type="EMBL" id="AF086924">
    <property type="protein sequence ID" value="AAG39636.1"/>
    <property type="molecule type" value="mRNA"/>
</dbReference>
<dbReference type="EMBL" id="AF145027">
    <property type="protein sequence ID" value="AAP97279.1"/>
    <property type="molecule type" value="mRNA"/>
</dbReference>
<dbReference type="EMBL" id="AK093115">
    <property type="protein sequence ID" value="BAG52658.1"/>
    <property type="molecule type" value="mRNA"/>
</dbReference>
<dbReference type="EMBL" id="AK296474">
    <property type="protein sequence ID" value="BAH12367.1"/>
    <property type="molecule type" value="mRNA"/>
</dbReference>
<dbReference type="EMBL" id="AK316003">
    <property type="protein sequence ID" value="BAH14374.1"/>
    <property type="molecule type" value="mRNA"/>
</dbReference>
<dbReference type="EMBL" id="AC093323">
    <property type="status" value="NOT_ANNOTATED_CDS"/>
    <property type="molecule type" value="Genomic_DNA"/>
</dbReference>
<dbReference type="EMBL" id="AC114815">
    <property type="status" value="NOT_ANNOTATED_CDS"/>
    <property type="molecule type" value="Genomic_DNA"/>
</dbReference>
<dbReference type="EMBL" id="AC116317">
    <property type="status" value="NOT_ANNOTATED_CDS"/>
    <property type="molecule type" value="Genomic_DNA"/>
</dbReference>
<dbReference type="EMBL" id="AC122939">
    <property type="status" value="NOT_ANNOTATED_CDS"/>
    <property type="molecule type" value="Genomic_DNA"/>
</dbReference>
<dbReference type="EMBL" id="CH471131">
    <property type="protein sequence ID" value="EAW82393.1"/>
    <property type="molecule type" value="Genomic_DNA"/>
</dbReference>
<dbReference type="EMBL" id="CH471131">
    <property type="protein sequence ID" value="EAW82394.1"/>
    <property type="molecule type" value="Genomic_DNA"/>
</dbReference>
<dbReference type="EMBL" id="CH471131">
    <property type="protein sequence ID" value="EAW82395.1"/>
    <property type="molecule type" value="Genomic_DNA"/>
</dbReference>
<dbReference type="EMBL" id="BC032954">
    <property type="protein sequence ID" value="AAH32954.1"/>
    <property type="molecule type" value="mRNA"/>
</dbReference>
<dbReference type="CCDS" id="CCDS3387.1">
    <molecule id="Q9Y2T4-1"/>
</dbReference>
<dbReference type="CCDS" id="CCDS3388.1">
    <molecule id="Q9Y2T4-2"/>
</dbReference>
<dbReference type="CCDS" id="CCDS56304.1">
    <molecule id="Q9Y2T4-3"/>
</dbReference>
<dbReference type="CCDS" id="CCDS56305.1">
    <molecule id="Q9Y2T4-4"/>
</dbReference>
<dbReference type="PIR" id="JC7153">
    <property type="entry name" value="JC7153"/>
</dbReference>
<dbReference type="RefSeq" id="NP_001193923.1">
    <molecule id="Q9Y2T4-4"/>
    <property type="nucleotide sequence ID" value="NM_001206994.2"/>
</dbReference>
<dbReference type="RefSeq" id="NP_001193924.1">
    <molecule id="Q9Y2T4-4"/>
    <property type="nucleotide sequence ID" value="NM_001206995.2"/>
</dbReference>
<dbReference type="RefSeq" id="NP_001193925.1">
    <molecule id="Q9Y2T4-3"/>
    <property type="nucleotide sequence ID" value="NM_001206996.2"/>
</dbReference>
<dbReference type="RefSeq" id="NP_065149.2">
    <molecule id="Q9Y2T4-1"/>
    <property type="nucleotide sequence ID" value="NM_020416.3"/>
</dbReference>
<dbReference type="RefSeq" id="NP_870991.1">
    <molecule id="Q9Y2T4-2"/>
    <property type="nucleotide sequence ID" value="NM_181876.3"/>
</dbReference>
<dbReference type="SMR" id="Q9Y2T4"/>
<dbReference type="BioGRID" id="111514">
    <property type="interactions" value="69"/>
</dbReference>
<dbReference type="FunCoup" id="Q9Y2T4">
    <property type="interactions" value="1492"/>
</dbReference>
<dbReference type="IntAct" id="Q9Y2T4">
    <property type="interactions" value="48"/>
</dbReference>
<dbReference type="MINT" id="Q9Y2T4"/>
<dbReference type="STRING" id="9606.ENSP00000372042"/>
<dbReference type="iPTMnet" id="Q9Y2T4"/>
<dbReference type="PhosphoSitePlus" id="Q9Y2T4"/>
<dbReference type="BioMuta" id="PPP2R2C"/>
<dbReference type="DMDM" id="145559437"/>
<dbReference type="jPOST" id="Q9Y2T4"/>
<dbReference type="MassIVE" id="Q9Y2T4"/>
<dbReference type="PaxDb" id="9606-ENSP00000335083"/>
<dbReference type="PeptideAtlas" id="Q9Y2T4"/>
<dbReference type="ProteomicsDB" id="85893"/>
<dbReference type="ProteomicsDB" id="85894">
    <molecule id="Q9Y2T4-2"/>
</dbReference>
<dbReference type="ProteomicsDB" id="85895">
    <molecule id="Q9Y2T4-3"/>
</dbReference>
<dbReference type="ProteomicsDB" id="85896">
    <molecule id="Q9Y2T4-4"/>
</dbReference>
<dbReference type="Antibodypedia" id="22656">
    <property type="antibodies" value="104 antibodies from 25 providers"/>
</dbReference>
<dbReference type="DNASU" id="5522"/>
<dbReference type="Ensembl" id="ENST00000335585.9">
    <molecule id="Q9Y2T4-2"/>
    <property type="protein sequence ID" value="ENSP00000335083.5"/>
    <property type="gene ID" value="ENSG00000074211.14"/>
</dbReference>
<dbReference type="Ensembl" id="ENST00000382599.9">
    <molecule id="Q9Y2T4-1"/>
    <property type="protein sequence ID" value="ENSP00000372042.4"/>
    <property type="gene ID" value="ENSG00000074211.14"/>
</dbReference>
<dbReference type="Ensembl" id="ENST00000506140.5">
    <molecule id="Q9Y2T4-4"/>
    <property type="protein sequence ID" value="ENSP00000423649.1"/>
    <property type="gene ID" value="ENSG00000074211.14"/>
</dbReference>
<dbReference type="Ensembl" id="ENST00000507294.1">
    <molecule id="Q9Y2T4-4"/>
    <property type="protein sequence ID" value="ENSP00000425247.1"/>
    <property type="gene ID" value="ENSG00000074211.14"/>
</dbReference>
<dbReference type="Ensembl" id="ENST00000515571.5">
    <molecule id="Q9Y2T4-3"/>
    <property type="protein sequence ID" value="ENSP00000422374.1"/>
    <property type="gene ID" value="ENSG00000074211.14"/>
</dbReference>
<dbReference type="GeneID" id="5522"/>
<dbReference type="KEGG" id="hsa:5522"/>
<dbReference type="MANE-Select" id="ENST00000382599.9">
    <property type="protein sequence ID" value="ENSP00000372042.4"/>
    <property type="RefSeq nucleotide sequence ID" value="NM_020416.4"/>
    <property type="RefSeq protein sequence ID" value="NP_065149.2"/>
</dbReference>
<dbReference type="UCSC" id="uc003gja.3">
    <molecule id="Q9Y2T4-1"/>
    <property type="organism name" value="human"/>
</dbReference>
<dbReference type="AGR" id="HGNC:9306"/>
<dbReference type="CTD" id="5522"/>
<dbReference type="DisGeNET" id="5522"/>
<dbReference type="GeneCards" id="PPP2R2C"/>
<dbReference type="HGNC" id="HGNC:9306">
    <property type="gene designation" value="PPP2R2C"/>
</dbReference>
<dbReference type="HPA" id="ENSG00000074211">
    <property type="expression patterns" value="Tissue enhanced (brain)"/>
</dbReference>
<dbReference type="MalaCards" id="PPP2R2C"/>
<dbReference type="MIM" id="605997">
    <property type="type" value="gene"/>
</dbReference>
<dbReference type="neXtProt" id="NX_Q9Y2T4"/>
<dbReference type="OpenTargets" id="ENSG00000074211"/>
<dbReference type="PharmGKB" id="PA33670"/>
<dbReference type="VEuPathDB" id="HostDB:ENSG00000074211"/>
<dbReference type="eggNOG" id="KOG1354">
    <property type="taxonomic scope" value="Eukaryota"/>
</dbReference>
<dbReference type="GeneTree" id="ENSGT00950000182864"/>
<dbReference type="HOGENOM" id="CLU_021713_3_3_1"/>
<dbReference type="InParanoid" id="Q9Y2T4"/>
<dbReference type="OMA" id="LVPMELI"/>
<dbReference type="OrthoDB" id="6274823at2759"/>
<dbReference type="PAN-GO" id="Q9Y2T4">
    <property type="GO annotations" value="3 GO annotations based on evolutionary models"/>
</dbReference>
<dbReference type="PhylomeDB" id="Q9Y2T4"/>
<dbReference type="TreeFam" id="TF105553"/>
<dbReference type="PathwayCommons" id="Q9Y2T4"/>
<dbReference type="SignaLink" id="Q9Y2T4"/>
<dbReference type="SIGNOR" id="Q9Y2T4"/>
<dbReference type="BioGRID-ORCS" id="5522">
    <property type="hits" value="11 hits in 1144 CRISPR screens"/>
</dbReference>
<dbReference type="ChiTaRS" id="PPP2R2C">
    <property type="organism name" value="human"/>
</dbReference>
<dbReference type="GeneWiki" id="PPP2R2C"/>
<dbReference type="GenomeRNAi" id="5522"/>
<dbReference type="Pharos" id="Q9Y2T4">
    <property type="development level" value="Tbio"/>
</dbReference>
<dbReference type="PRO" id="PR:Q9Y2T4"/>
<dbReference type="Proteomes" id="UP000005640">
    <property type="component" value="Chromosome 4"/>
</dbReference>
<dbReference type="RNAct" id="Q9Y2T4">
    <property type="molecule type" value="protein"/>
</dbReference>
<dbReference type="Bgee" id="ENSG00000074211">
    <property type="expression patterns" value="Expressed in middle temporal gyrus and 162 other cell types or tissues"/>
</dbReference>
<dbReference type="ExpressionAtlas" id="Q9Y2T4">
    <property type="expression patterns" value="baseline and differential"/>
</dbReference>
<dbReference type="GO" id="GO:0005829">
    <property type="term" value="C:cytosol"/>
    <property type="evidence" value="ECO:0000318"/>
    <property type="project" value="GO_Central"/>
</dbReference>
<dbReference type="GO" id="GO:0000159">
    <property type="term" value="C:protein phosphatase type 2A complex"/>
    <property type="evidence" value="ECO:0000318"/>
    <property type="project" value="GO_Central"/>
</dbReference>
<dbReference type="GO" id="GO:0019888">
    <property type="term" value="F:protein phosphatase regulator activity"/>
    <property type="evidence" value="ECO:0000318"/>
    <property type="project" value="GO_Central"/>
</dbReference>
<dbReference type="FunFam" id="2.130.10.10:FF:000002">
    <property type="entry name" value="Serine/threonine-protein phosphatase 2A 55 kDa regulatory subunit B"/>
    <property type="match status" value="1"/>
</dbReference>
<dbReference type="Gene3D" id="2.130.10.10">
    <property type="entry name" value="YVTN repeat-like/Quinoprotein amine dehydrogenase"/>
    <property type="match status" value="1"/>
</dbReference>
<dbReference type="InterPro" id="IPR000009">
    <property type="entry name" value="PP2A_PR55"/>
</dbReference>
<dbReference type="InterPro" id="IPR018067">
    <property type="entry name" value="PP2A_PR55_CS"/>
</dbReference>
<dbReference type="InterPro" id="IPR015943">
    <property type="entry name" value="WD40/YVTN_repeat-like_dom_sf"/>
</dbReference>
<dbReference type="InterPro" id="IPR036322">
    <property type="entry name" value="WD40_repeat_dom_sf"/>
</dbReference>
<dbReference type="InterPro" id="IPR001680">
    <property type="entry name" value="WD40_rpt"/>
</dbReference>
<dbReference type="PANTHER" id="PTHR11871">
    <property type="entry name" value="PROTEIN PHOSPHATASE PP2A REGULATORY SUBUNIT B"/>
    <property type="match status" value="1"/>
</dbReference>
<dbReference type="PIRSF" id="PIRSF037309">
    <property type="entry name" value="PP2A_PR55"/>
    <property type="match status" value="1"/>
</dbReference>
<dbReference type="PRINTS" id="PR00600">
    <property type="entry name" value="PP2APR55"/>
</dbReference>
<dbReference type="SMART" id="SM00320">
    <property type="entry name" value="WD40"/>
    <property type="match status" value="6"/>
</dbReference>
<dbReference type="SUPFAM" id="SSF50978">
    <property type="entry name" value="WD40 repeat-like"/>
    <property type="match status" value="1"/>
</dbReference>
<dbReference type="PROSITE" id="PS01024">
    <property type="entry name" value="PR55_1"/>
    <property type="match status" value="1"/>
</dbReference>
<dbReference type="PROSITE" id="PS01025">
    <property type="entry name" value="PR55_2"/>
    <property type="match status" value="1"/>
</dbReference>
<sequence>MGEDTDTRKINHSFLRDHSYVTEADIISTVEFNHTGELLATGDKGGRVVIFQREPESKNAPHSQGEYDVYSTFQSHEPEFDYLKSLEIEEKINKIKWLPQQNAAHSLLSTNDKTIKLWKITERDKRPEGYNLKDEEGKLKDLSTVTSLQVPVLKPMDLMVEVSPRRIFANGHTYHINSISVNSDCETYMSADDLRINLWHLAITDRSFNIVDIKPANMEDLTEVITASEFHPHHCNLFVYSSSKGSLRLCDMRAAALCDKHSKLFEEPEDPSNRSFFSEIISSVSDVKFSHSGRYMLTRDYLTVKVWDLNMEARPIETYQVHDYLRSKLCSLYENDCIFDKFECAWNGSDSVIMTGAYNNFFRMFDRNTKRDVTLEASRESSKPRAVLKPRRVCVGGKRRRDDISVDSLDFTKKILHTAWHPAENIIAIAATNNLYIFQDKVNSDMH</sequence>
<evidence type="ECO:0000250" key="1"/>
<evidence type="ECO:0000269" key="2">
    <source>
    </source>
</evidence>
<evidence type="ECO:0000303" key="3">
    <source>
    </source>
</evidence>
<evidence type="ECO:0000303" key="4">
    <source>
    </source>
</evidence>
<evidence type="ECO:0000305" key="5"/>